<feature type="chain" id="PRO_0000391715" description="Secreted effector protein SseB">
    <location>
        <begin position="1"/>
        <end position="196"/>
    </location>
</feature>
<reference key="1">
    <citation type="journal article" date="1998" name="Mol. Microbiol.">
        <title>Genes encoding putative effector proteins of the type III secretion system of Salmonella pathogenicity island 2 are required for bacterial virulence and proliferation in macrophages.</title>
        <authorList>
            <person name="Hensel M."/>
            <person name="Shea J.E."/>
            <person name="Waterman S.R."/>
            <person name="Mundy R."/>
            <person name="Nikolaus T."/>
            <person name="Banks G."/>
            <person name="Vazquez-Torres A."/>
            <person name="Gleeson C."/>
            <person name="Fang F.C."/>
            <person name="Holden D.W."/>
        </authorList>
    </citation>
    <scope>NUCLEOTIDE SEQUENCE [GENOMIC DNA]</scope>
    <scope>DISRUPTION PHENOTYPE</scope>
    <source>
        <strain>ATCC 14028 / SGSC 2980 / CDC 6516-60 / NCTC 12023</strain>
    </source>
</reference>
<reference key="2">
    <citation type="journal article" date="1998" name="Mol. Microbiol.">
        <title>Macrophage-dependent induction of the Salmonella pathogenicity island 2 type III secretion system and its role in intracellular survival.</title>
        <authorList>
            <person name="Cirillo D.M."/>
            <person name="Valdivia R.H."/>
            <person name="Monack D.M."/>
            <person name="Falkow S."/>
        </authorList>
    </citation>
    <scope>NUCLEOTIDE SEQUENCE [GENOMIC DNA]</scope>
    <scope>INDUCTION</scope>
    <source>
        <strain>SL1344</strain>
    </source>
</reference>
<reference key="3">
    <citation type="journal article" date="2001" name="Nature">
        <title>Complete genome sequence of Salmonella enterica serovar Typhimurium LT2.</title>
        <authorList>
            <person name="McClelland M."/>
            <person name="Sanderson K.E."/>
            <person name="Spieth J."/>
            <person name="Clifton S.W."/>
            <person name="Latreille P."/>
            <person name="Courtney L."/>
            <person name="Porwollik S."/>
            <person name="Ali J."/>
            <person name="Dante M."/>
            <person name="Du F."/>
            <person name="Hou S."/>
            <person name="Layman D."/>
            <person name="Leonard S."/>
            <person name="Nguyen C."/>
            <person name="Scott K."/>
            <person name="Holmes A."/>
            <person name="Grewal N."/>
            <person name="Mulvaney E."/>
            <person name="Ryan E."/>
            <person name="Sun H."/>
            <person name="Florea L."/>
            <person name="Miller W."/>
            <person name="Stoneking T."/>
            <person name="Nhan M."/>
            <person name="Waterston R."/>
            <person name="Wilson R.K."/>
        </authorList>
    </citation>
    <scope>NUCLEOTIDE SEQUENCE [LARGE SCALE GENOMIC DNA]</scope>
    <source>
        <strain>LT2 / SGSC1412 / ATCC 700720</strain>
    </source>
</reference>
<reference key="4">
    <citation type="journal article" date="2001" name="J. Bacteriol.">
        <title>SseBCD proteins are secreted by the type III secretion system of Salmonella pathogenicity island 2 and function as a translocon.</title>
        <authorList>
            <person name="Nikolaus T."/>
            <person name="Deiwick J."/>
            <person name="Rappl C."/>
            <person name="Freeman J.A."/>
            <person name="Schroder W."/>
            <person name="Miller S.I."/>
            <person name="Hensel M."/>
        </authorList>
    </citation>
    <scope>FUNCTION</scope>
    <scope>SUBUNIT</scope>
    <scope>SUBCELLULAR LOCATION</scope>
    <scope>SECRETION VIA TYPE III SECRETION SYSTEM</scope>
    <source>
        <strain>ATCC 14028 / SGSC 2980 / CDC 6516-60 / NCTC 12023</strain>
    </source>
</reference>
<reference key="5">
    <citation type="journal article" date="2003" name="Microbiology">
        <title>SseA is a chaperone for the SseB and SseD translocon components of the Salmonella pathogenicity-island-2-encoded type III secretion system.</title>
        <authorList>
            <person name="Ruiz-Albert J."/>
            <person name="Mundy R."/>
            <person name="Yu X.J."/>
            <person name="Beuzon C.R."/>
            <person name="Holden D.W."/>
        </authorList>
    </citation>
    <scope>INTERACTION WITH SSEA</scope>
    <source>
        <strain>ATCC 14028 / SGSC 2980 / CDC 6516-60 / NCTC 12023</strain>
    </source>
</reference>
<reference key="6">
    <citation type="journal article" date="2003" name="Microbiology">
        <title>The roles of SsrA-SsrB and OmpR-EnvZ in the regulation of genes encoding the Salmonella typhimurium SPI-2 type III secretion system.</title>
        <authorList>
            <person name="Garmendia J."/>
            <person name="Beuzon C.R."/>
            <person name="Ruiz-Albert J."/>
            <person name="Holden D.W."/>
        </authorList>
    </citation>
    <scope>INDUCTION</scope>
    <source>
        <strain evidence="6">ATCC 14028 / SGSC 2980 / CDC 6516-60 / NCTC 12023</strain>
    </source>
</reference>
<reference key="7">
    <citation type="journal article" date="2003" name="Mol. Microbiol.">
        <title>SseA acts as the chaperone for the SseB component of the Salmonella pathogenicity island 2 translocon.</title>
        <authorList>
            <person name="Zurawski D.V."/>
            <person name="Stein M.A."/>
        </authorList>
    </citation>
    <scope>INTERACTION WITH SSEA</scope>
    <source>
        <strain>SL1344</strain>
    </source>
</reference>
<reference key="8">
    <citation type="journal article" date="2004" name="Microbiology">
        <title>The SPI2-encoded SseA chaperone has discrete domains required for SseB stabilization and export, and binds within the C-terminus of SseB and SseD.</title>
        <authorList>
            <person name="Zurawski D.V."/>
            <person name="Stein M.A."/>
        </authorList>
    </citation>
    <scope>INTERACTION WITH SSEA</scope>
    <source>
        <strain>SL1344</strain>
    </source>
</reference>
<reference key="9">
    <citation type="journal article" date="2008" name="FEMS Immunol. Med. Microbiol.">
        <title>Identification of Salmonella SPI-2 secretion system components required for SpvB-mediated cytotoxicity in macrophages and virulence in mice.</title>
        <authorList>
            <person name="Browne S.H."/>
            <person name="Hasegawa P."/>
            <person name="Okamoto S."/>
            <person name="Fierer J."/>
            <person name="Guiney D.G."/>
        </authorList>
    </citation>
    <scope>ROLE IN SPVB EXPORT</scope>
    <scope>DISRUPTION PHENOTYPE</scope>
    <source>
        <strain>LT2 / SGSC1412 / ATCC 700720</strain>
    </source>
</reference>
<organism>
    <name type="scientific">Salmonella typhimurium (strain LT2 / SGSC1412 / ATCC 700720)</name>
    <dbReference type="NCBI Taxonomy" id="99287"/>
    <lineage>
        <taxon>Bacteria</taxon>
        <taxon>Pseudomonadati</taxon>
        <taxon>Pseudomonadota</taxon>
        <taxon>Gammaproteobacteria</taxon>
        <taxon>Enterobacterales</taxon>
        <taxon>Enterobacteriaceae</taxon>
        <taxon>Salmonella</taxon>
    </lineage>
</organism>
<dbReference type="EMBL" id="AJ224892">
    <property type="protein sequence ID" value="CAA12185.1"/>
    <property type="molecule type" value="Genomic_DNA"/>
</dbReference>
<dbReference type="EMBL" id="AF020808">
    <property type="protein sequence ID" value="AAC28879.1"/>
    <property type="molecule type" value="Genomic_DNA"/>
</dbReference>
<dbReference type="EMBL" id="AE006468">
    <property type="protein sequence ID" value="AAL20322.1"/>
    <property type="molecule type" value="Genomic_DNA"/>
</dbReference>
<dbReference type="RefSeq" id="NP_460363.1">
    <property type="nucleotide sequence ID" value="NC_003197.2"/>
</dbReference>
<dbReference type="RefSeq" id="WP_000094422.1">
    <property type="nucleotide sequence ID" value="NC_003197.2"/>
</dbReference>
<dbReference type="IntAct" id="Q7BVH7">
    <property type="interactions" value="2"/>
</dbReference>
<dbReference type="STRING" id="99287.STM1398"/>
<dbReference type="TCDB" id="1.C.36.5.1">
    <property type="family name" value="the bacterial type iii-target cell pore (iiitcp) family"/>
</dbReference>
<dbReference type="PaxDb" id="99287-STM1398"/>
<dbReference type="GeneID" id="1252916"/>
<dbReference type="KEGG" id="stm:STM1398"/>
<dbReference type="PATRIC" id="fig|99287.12.peg.1482"/>
<dbReference type="HOGENOM" id="CLU_091357_0_0_6"/>
<dbReference type="OMA" id="WGEISTM"/>
<dbReference type="BioCyc" id="SENT99287:STM1398-MONOMER"/>
<dbReference type="PHI-base" id="PHI:2622"/>
<dbReference type="Proteomes" id="UP000001014">
    <property type="component" value="Chromosome"/>
</dbReference>
<dbReference type="GO" id="GO:0009986">
    <property type="term" value="C:cell surface"/>
    <property type="evidence" value="ECO:0000314"/>
    <property type="project" value="UniProtKB"/>
</dbReference>
<dbReference type="GO" id="GO:0005829">
    <property type="term" value="C:cytosol"/>
    <property type="evidence" value="ECO:0000314"/>
    <property type="project" value="AgBase"/>
</dbReference>
<dbReference type="GO" id="GO:0005576">
    <property type="term" value="C:extracellular region"/>
    <property type="evidence" value="ECO:0007669"/>
    <property type="project" value="UniProtKB-SubCell"/>
</dbReference>
<dbReference type="GO" id="GO:0030254">
    <property type="term" value="P:protein secretion by the type III secretion system"/>
    <property type="evidence" value="ECO:0000314"/>
    <property type="project" value="UniProtKB"/>
</dbReference>
<dbReference type="InterPro" id="IPR005095">
    <property type="entry name" value="EspA"/>
</dbReference>
<dbReference type="InterPro" id="IPR035074">
    <property type="entry name" value="EspA/CesA-like"/>
</dbReference>
<dbReference type="NCBIfam" id="NF011891">
    <property type="entry name" value="PRK15364.1"/>
    <property type="match status" value="1"/>
</dbReference>
<dbReference type="Pfam" id="PF03433">
    <property type="entry name" value="EspA"/>
    <property type="match status" value="1"/>
</dbReference>
<dbReference type="SUPFAM" id="SSF116927">
    <property type="entry name" value="EspA/CesA-like"/>
    <property type="match status" value="1"/>
</dbReference>
<gene>
    <name type="primary">sseB</name>
    <name type="ordered locus">STM1398</name>
</gene>
<name>SSEB_SALTY</name>
<accession>Q7BVH7</accession>
<accession>Q7CQM1</accession>
<evidence type="ECO:0000269" key="1">
    <source>
    </source>
</evidence>
<evidence type="ECO:0000269" key="2">
    <source>
    </source>
</evidence>
<evidence type="ECO:0000269" key="3">
    <source>
    </source>
</evidence>
<evidence type="ECO:0000269" key="4">
    <source>
    </source>
</evidence>
<evidence type="ECO:0000269" key="5">
    <source>
    </source>
</evidence>
<evidence type="ECO:0000303" key="6">
    <source>
    </source>
</evidence>
<evidence type="ECO:0000305" key="7"/>
<keyword id="KW-0653">Protein transport</keyword>
<keyword id="KW-1185">Reference proteome</keyword>
<keyword id="KW-0964">Secreted</keyword>
<keyword id="KW-0813">Transport</keyword>
<keyword id="KW-0843">Virulence</keyword>
<sequence length="196" mass="21495">MSSGNILWGSQNPIVFKNSFGVSNADTGSQDDLSQQNPFAEGYGVLLILLMVIQAIANNKFIEVQKNAERARNTQEKSNEMDEVIAKAAKGDAKTKEEVPEDVIKYMRDNGILIDGMTIDDYMAKYGDHGKLDKGGLQAIKAALDNDANRNTDLMSQGQITIQKMSQELNAVLTQLTGLISKWGEISSMIAQKTYS</sequence>
<comment type="function">
    <text evidence="1 3">Effector proteins function to alter host cell physiology and promote bacterial survival in host tissues. May act as a translocator that mediates translocation of SPI-2 T3SS effector proteins from intraphagosomal bacterial cells into the host cells. SseB is required for correct localization of SseC and SseD on the bacterial cell surface.</text>
</comment>
<comment type="subunit">
    <text evidence="1">May form a complex with SseC and SseD (PubMed:11567004). Binds to the chaperone SseA (PubMed:11567004).</text>
</comment>
<comment type="interaction">
    <interactant intactId="EBI-2030613">
        <id>Q7BVH7</id>
    </interactant>
    <interactant intactId="EBI-2030631">
        <id>O84944</id>
        <label>sseA</label>
    </interactant>
    <organismsDiffer>false</organismsDiffer>
    <experiments>4</experiments>
</comment>
<comment type="subcellular location">
    <subcellularLocation>
        <location evidence="1">Secreted</location>
    </subcellularLocation>
    <subcellularLocation>
        <location evidence="1">Cell surface</location>
    </subcellularLocation>
    <text>Secreted via type III secretion system 2 (SPI-2 T3SS). After secretion, localizes mainly on the surface of the bacterial cell.</text>
</comment>
<comment type="induction">
    <text evidence="2 5">Expressed when growing intracellularly and is maximally induced 6 hours following infection; expression in host cells is dependent on an acidic environment (PubMed:12949164, PubMed:9786194). Repressed in conditions of high calcium and by osmotic stress (PubMed:12949164).</text>
</comment>
<comment type="disruption phenotype">
    <text evidence="3 4">Mutant is severely attenuated in virulence. Disruption prevents SpvB-induced F-actin depolymerization in human macrophages without affecting intra-bacterial SpvB protein levels.</text>
</comment>
<comment type="similarity">
    <text evidence="7">Belongs to the EspA/SseB family.</text>
</comment>
<proteinExistence type="evidence at protein level"/>
<protein>
    <recommendedName>
        <fullName>Secreted effector protein SseB</fullName>
    </recommendedName>
    <alternativeName>
        <fullName>Secretion system effector B</fullName>
    </alternativeName>
</protein>